<feature type="chain" id="PRO_1000130939" description="Inosine/xanthosine triphosphatase">
    <location>
        <begin position="1"/>
        <end position="171"/>
    </location>
</feature>
<feature type="binding site" evidence="1">
    <location>
        <begin position="8"/>
        <end position="13"/>
    </location>
    <ligand>
        <name>substrate</name>
    </ligand>
</feature>
<feature type="binding site" evidence="1">
    <location>
        <position position="38"/>
    </location>
    <ligand>
        <name>Mg(2+)</name>
        <dbReference type="ChEBI" id="CHEBI:18420"/>
    </ligand>
</feature>
<keyword id="KW-0378">Hydrolase</keyword>
<keyword id="KW-0460">Magnesium</keyword>
<keyword id="KW-0464">Manganese</keyword>
<keyword id="KW-0479">Metal-binding</keyword>
<keyword id="KW-0546">Nucleotide metabolism</keyword>
<keyword id="KW-0547">Nucleotide-binding</keyword>
<evidence type="ECO:0000255" key="1">
    <source>
        <dbReference type="HAMAP-Rule" id="MF_00648"/>
    </source>
</evidence>
<name>NCPP_KLEP3</name>
<sequence length="171" mass="18331">MHHVVSATTNPAKIQAILQAFNEIFGEGSCHIESVSVESGVPEQPFGSEETRAGARNRVANARLVQPSADFWVAIEAGIDDGSTFSWVVIESADRRGEARSATLPLPEVILEQVRAGEALGPVMSQYTGIDQIGRKEGAIGVFTGGKLTRSSVYHQAVVLALSPFHNAIYR</sequence>
<dbReference type="EC" id="3.6.1.73" evidence="1"/>
<dbReference type="EMBL" id="CP000964">
    <property type="protein sequence ID" value="ACI09978.1"/>
    <property type="molecule type" value="Genomic_DNA"/>
</dbReference>
<dbReference type="SMR" id="B5Y265"/>
<dbReference type="KEGG" id="kpe:KPK_4766"/>
<dbReference type="HOGENOM" id="CLU_087417_1_0_6"/>
<dbReference type="BioCyc" id="KPNE507522:GI0B-4746-MONOMER"/>
<dbReference type="Proteomes" id="UP000001734">
    <property type="component" value="Chromosome"/>
</dbReference>
<dbReference type="GO" id="GO:0103023">
    <property type="term" value="F:ITPase activity"/>
    <property type="evidence" value="ECO:0007669"/>
    <property type="project" value="UniProtKB-EC"/>
</dbReference>
<dbReference type="GO" id="GO:0046872">
    <property type="term" value="F:metal ion binding"/>
    <property type="evidence" value="ECO:0007669"/>
    <property type="project" value="UniProtKB-KW"/>
</dbReference>
<dbReference type="GO" id="GO:0000166">
    <property type="term" value="F:nucleotide binding"/>
    <property type="evidence" value="ECO:0007669"/>
    <property type="project" value="UniProtKB-KW"/>
</dbReference>
<dbReference type="GO" id="GO:0017111">
    <property type="term" value="F:ribonucleoside triphosphate phosphatase activity"/>
    <property type="evidence" value="ECO:0000250"/>
    <property type="project" value="UniProtKB"/>
</dbReference>
<dbReference type="GO" id="GO:0009117">
    <property type="term" value="P:nucleotide metabolic process"/>
    <property type="evidence" value="ECO:0007669"/>
    <property type="project" value="UniProtKB-KW"/>
</dbReference>
<dbReference type="GO" id="GO:0006772">
    <property type="term" value="P:thiamine metabolic process"/>
    <property type="evidence" value="ECO:0007669"/>
    <property type="project" value="TreeGrafter"/>
</dbReference>
<dbReference type="FunFam" id="3.90.950.10:FF:000002">
    <property type="entry name" value="Inosine/xanthosine triphosphatase"/>
    <property type="match status" value="1"/>
</dbReference>
<dbReference type="Gene3D" id="3.90.950.10">
    <property type="match status" value="1"/>
</dbReference>
<dbReference type="HAMAP" id="MF_00648">
    <property type="entry name" value="Non_canon_purine_NTPase_YjjX"/>
    <property type="match status" value="1"/>
</dbReference>
<dbReference type="InterPro" id="IPR029001">
    <property type="entry name" value="ITPase-like_fam"/>
</dbReference>
<dbReference type="InterPro" id="IPR002786">
    <property type="entry name" value="Non_canon_purine_NTPase"/>
</dbReference>
<dbReference type="InterPro" id="IPR026533">
    <property type="entry name" value="NTPase/PRRC1"/>
</dbReference>
<dbReference type="InterPro" id="IPR050299">
    <property type="entry name" value="YjjX_NTPase"/>
</dbReference>
<dbReference type="NCBIfam" id="TIGR00258">
    <property type="entry name" value="inosine/xanthosine triphosphatase"/>
    <property type="match status" value="1"/>
</dbReference>
<dbReference type="NCBIfam" id="NF003459">
    <property type="entry name" value="PRK05074.1"/>
    <property type="match status" value="1"/>
</dbReference>
<dbReference type="PANTHER" id="PTHR34699">
    <property type="match status" value="1"/>
</dbReference>
<dbReference type="PANTHER" id="PTHR34699:SF2">
    <property type="entry name" value="NON-CANONICAL PURINE NTP PHOSPHATASE_PRRC1 DOMAIN-CONTAINING PROTEIN"/>
    <property type="match status" value="1"/>
</dbReference>
<dbReference type="Pfam" id="PF01931">
    <property type="entry name" value="NTPase_I-T"/>
    <property type="match status" value="1"/>
</dbReference>
<dbReference type="SUPFAM" id="SSF52972">
    <property type="entry name" value="ITPase-like"/>
    <property type="match status" value="1"/>
</dbReference>
<comment type="function">
    <text evidence="1">Phosphatase that hydrolyzes non-canonical purine nucleotides such as XTP and ITP to their respective diphosphate derivatives. Probably excludes non-canonical purines from DNA/RNA precursor pool, thus preventing their incorporation into DNA/RNA and avoiding chromosomal lesions.</text>
</comment>
<comment type="catalytic activity">
    <reaction evidence="1">
        <text>XTP + H2O = XDP + phosphate + H(+)</text>
        <dbReference type="Rhea" id="RHEA:28406"/>
        <dbReference type="ChEBI" id="CHEBI:15377"/>
        <dbReference type="ChEBI" id="CHEBI:15378"/>
        <dbReference type="ChEBI" id="CHEBI:43474"/>
        <dbReference type="ChEBI" id="CHEBI:59884"/>
        <dbReference type="ChEBI" id="CHEBI:61314"/>
        <dbReference type="EC" id="3.6.1.73"/>
    </reaction>
</comment>
<comment type="catalytic activity">
    <reaction evidence="1">
        <text>ITP + H2O = IDP + phosphate + H(+)</text>
        <dbReference type="Rhea" id="RHEA:28330"/>
        <dbReference type="ChEBI" id="CHEBI:15377"/>
        <dbReference type="ChEBI" id="CHEBI:15378"/>
        <dbReference type="ChEBI" id="CHEBI:43474"/>
        <dbReference type="ChEBI" id="CHEBI:58280"/>
        <dbReference type="ChEBI" id="CHEBI:61402"/>
        <dbReference type="EC" id="3.6.1.73"/>
    </reaction>
</comment>
<comment type="cofactor">
    <cofactor evidence="1">
        <name>Mg(2+)</name>
        <dbReference type="ChEBI" id="CHEBI:18420"/>
    </cofactor>
    <cofactor evidence="1">
        <name>Mn(2+)</name>
        <dbReference type="ChEBI" id="CHEBI:29035"/>
    </cofactor>
    <text evidence="1">Binds 1 divalent metal cation per subunit; can use either Mg(2+) or Mn(2+).</text>
</comment>
<comment type="subunit">
    <text evidence="1">Homodimer.</text>
</comment>
<comment type="similarity">
    <text evidence="1">Belongs to the YjjX NTPase family.</text>
</comment>
<proteinExistence type="inferred from homology"/>
<gene>
    <name type="ordered locus">KPK_4766</name>
</gene>
<accession>B5Y265</accession>
<reference key="1">
    <citation type="journal article" date="2008" name="PLoS Genet.">
        <title>Complete genome sequence of the N2-fixing broad host range endophyte Klebsiella pneumoniae 342 and virulence predictions verified in mice.</title>
        <authorList>
            <person name="Fouts D.E."/>
            <person name="Tyler H.L."/>
            <person name="DeBoy R.T."/>
            <person name="Daugherty S."/>
            <person name="Ren Q."/>
            <person name="Badger J.H."/>
            <person name="Durkin A.S."/>
            <person name="Huot H."/>
            <person name="Shrivastava S."/>
            <person name="Kothari S."/>
            <person name="Dodson R.J."/>
            <person name="Mohamoud Y."/>
            <person name="Khouri H."/>
            <person name="Roesch L.F.W."/>
            <person name="Krogfelt K.A."/>
            <person name="Struve C."/>
            <person name="Triplett E.W."/>
            <person name="Methe B.A."/>
        </authorList>
    </citation>
    <scope>NUCLEOTIDE SEQUENCE [LARGE SCALE GENOMIC DNA]</scope>
    <source>
        <strain>342</strain>
    </source>
</reference>
<organism>
    <name type="scientific">Klebsiella pneumoniae (strain 342)</name>
    <dbReference type="NCBI Taxonomy" id="507522"/>
    <lineage>
        <taxon>Bacteria</taxon>
        <taxon>Pseudomonadati</taxon>
        <taxon>Pseudomonadota</taxon>
        <taxon>Gammaproteobacteria</taxon>
        <taxon>Enterobacterales</taxon>
        <taxon>Enterobacteriaceae</taxon>
        <taxon>Klebsiella/Raoultella group</taxon>
        <taxon>Klebsiella</taxon>
        <taxon>Klebsiella pneumoniae complex</taxon>
    </lineage>
</organism>
<protein>
    <recommendedName>
        <fullName evidence="1">Inosine/xanthosine triphosphatase</fullName>
        <shortName evidence="1">ITPase/XTPase</shortName>
        <ecNumber evidence="1">3.6.1.73</ecNumber>
    </recommendedName>
    <alternativeName>
        <fullName evidence="1">Non-canonical purine NTP phosphatase</fullName>
    </alternativeName>
    <alternativeName>
        <fullName evidence="1">Non-standard purine NTP phosphatase</fullName>
    </alternativeName>
    <alternativeName>
        <fullName evidence="1">Nucleoside-triphosphate phosphatase</fullName>
        <shortName evidence="1">NTPase</shortName>
    </alternativeName>
</protein>